<name>ZN513_MOUSE</name>
<accession>Q6PD29</accession>
<accession>Q3U4K1</accession>
<accession>Q8BWH6</accession>
<dbReference type="EMBL" id="AK052459">
    <property type="protein sequence ID" value="BAC35001.1"/>
    <property type="status" value="ALT_SEQ"/>
    <property type="molecule type" value="mRNA"/>
</dbReference>
<dbReference type="EMBL" id="AK154195">
    <property type="protein sequence ID" value="BAE32430.1"/>
    <property type="molecule type" value="mRNA"/>
</dbReference>
<dbReference type="EMBL" id="BC058976">
    <property type="protein sequence ID" value="AAH58976.1"/>
    <property type="status" value="ALT_INIT"/>
    <property type="molecule type" value="mRNA"/>
</dbReference>
<dbReference type="CCDS" id="CCDS19178.2">
    <molecule id="Q6PD29-1"/>
</dbReference>
<dbReference type="CCDS" id="CCDS51458.1">
    <molecule id="Q6PD29-2"/>
</dbReference>
<dbReference type="RefSeq" id="NP_001171372.1">
    <molecule id="Q6PD29-2"/>
    <property type="nucleotide sequence ID" value="NM_001177901.1"/>
</dbReference>
<dbReference type="RefSeq" id="NP_780520.3">
    <molecule id="Q6PD29-1"/>
    <property type="nucleotide sequence ID" value="NM_175311.4"/>
</dbReference>
<dbReference type="RefSeq" id="XP_006503720.2">
    <property type="nucleotide sequence ID" value="XM_006503657.2"/>
</dbReference>
<dbReference type="SMR" id="Q6PD29"/>
<dbReference type="BioGRID" id="221569">
    <property type="interactions" value="29"/>
</dbReference>
<dbReference type="FunCoup" id="Q6PD29">
    <property type="interactions" value="2072"/>
</dbReference>
<dbReference type="IntAct" id="Q6PD29">
    <property type="interactions" value="5"/>
</dbReference>
<dbReference type="STRING" id="10090.ENSMUSP00000110238"/>
<dbReference type="GlyGen" id="Q6PD29">
    <property type="glycosylation" value="4 sites"/>
</dbReference>
<dbReference type="iPTMnet" id="Q6PD29"/>
<dbReference type="PhosphoSitePlus" id="Q6PD29"/>
<dbReference type="PaxDb" id="10090-ENSMUSP00000110238"/>
<dbReference type="PeptideAtlas" id="Q6PD29"/>
<dbReference type="ProteomicsDB" id="275083">
    <molecule id="Q6PD29-1"/>
</dbReference>
<dbReference type="ProteomicsDB" id="275084">
    <molecule id="Q6PD29-2"/>
</dbReference>
<dbReference type="Antibodypedia" id="55939">
    <property type="antibodies" value="71 antibodies from 17 providers"/>
</dbReference>
<dbReference type="DNASU" id="101023"/>
<dbReference type="Ensembl" id="ENSMUST00000031562.11">
    <molecule id="Q6PD29-2"/>
    <property type="protein sequence ID" value="ENSMUSP00000031562.9"/>
    <property type="gene ID" value="ENSMUSG00000043059.17"/>
</dbReference>
<dbReference type="Ensembl" id="ENSMUST00000114590.8">
    <molecule id="Q6PD29-1"/>
    <property type="protein sequence ID" value="ENSMUSP00000110238.2"/>
    <property type="gene ID" value="ENSMUSG00000043059.17"/>
</dbReference>
<dbReference type="GeneID" id="101023"/>
<dbReference type="KEGG" id="mmu:101023"/>
<dbReference type="UCSC" id="uc008wxn.1">
    <molecule id="Q6PD29-2"/>
    <property type="organism name" value="mouse"/>
</dbReference>
<dbReference type="UCSC" id="uc008wxo.2">
    <molecule id="Q6PD29-1"/>
    <property type="organism name" value="mouse"/>
</dbReference>
<dbReference type="AGR" id="MGI:2141255"/>
<dbReference type="CTD" id="101023"/>
<dbReference type="MGI" id="MGI:2141255">
    <property type="gene designation" value="Zfp513"/>
</dbReference>
<dbReference type="VEuPathDB" id="HostDB:ENSMUSG00000043059"/>
<dbReference type="eggNOG" id="KOG1721">
    <property type="taxonomic scope" value="Eukaryota"/>
</dbReference>
<dbReference type="GeneTree" id="ENSGT00940000158687"/>
<dbReference type="HOGENOM" id="CLU_002678_58_1_1"/>
<dbReference type="InParanoid" id="Q6PD29"/>
<dbReference type="OMA" id="SICGYSC"/>
<dbReference type="OrthoDB" id="654211at2759"/>
<dbReference type="PhylomeDB" id="Q6PD29"/>
<dbReference type="TreeFam" id="TF350015"/>
<dbReference type="BioGRID-ORCS" id="101023">
    <property type="hits" value="3 hits in 75 CRISPR screens"/>
</dbReference>
<dbReference type="ChiTaRS" id="Zfp513">
    <property type="organism name" value="mouse"/>
</dbReference>
<dbReference type="PRO" id="PR:Q6PD29"/>
<dbReference type="Proteomes" id="UP000000589">
    <property type="component" value="Chromosome 5"/>
</dbReference>
<dbReference type="RNAct" id="Q6PD29">
    <property type="molecule type" value="protein"/>
</dbReference>
<dbReference type="Bgee" id="ENSMUSG00000043059">
    <property type="expression patterns" value="Expressed in secondary oocyte and 236 other cell types or tissues"/>
</dbReference>
<dbReference type="ExpressionAtlas" id="Q6PD29">
    <property type="expression patterns" value="baseline and differential"/>
</dbReference>
<dbReference type="GO" id="GO:0005634">
    <property type="term" value="C:nucleus"/>
    <property type="evidence" value="ECO:0000250"/>
    <property type="project" value="UniProtKB"/>
</dbReference>
<dbReference type="GO" id="GO:0000976">
    <property type="term" value="F:transcription cis-regulatory region binding"/>
    <property type="evidence" value="ECO:0000314"/>
    <property type="project" value="UniProtKB"/>
</dbReference>
<dbReference type="GO" id="GO:0008270">
    <property type="term" value="F:zinc ion binding"/>
    <property type="evidence" value="ECO:0007669"/>
    <property type="project" value="UniProtKB-KW"/>
</dbReference>
<dbReference type="GO" id="GO:0060041">
    <property type="term" value="P:retina development in camera-type eye"/>
    <property type="evidence" value="ECO:0000250"/>
    <property type="project" value="UniProtKB"/>
</dbReference>
<dbReference type="FunFam" id="3.30.160.60:FF:000049">
    <property type="entry name" value="transcriptional repressor CTCF isoform X1"/>
    <property type="match status" value="2"/>
</dbReference>
<dbReference type="FunFam" id="3.30.160.60:FF:000123">
    <property type="entry name" value="transcriptional repressor CTCF isoform X1"/>
    <property type="match status" value="1"/>
</dbReference>
<dbReference type="FunFam" id="3.30.160.60:FF:000584">
    <property type="entry name" value="Zinc finger protein 513"/>
    <property type="match status" value="1"/>
</dbReference>
<dbReference type="FunFam" id="3.30.160.60:FF:000713">
    <property type="entry name" value="Zinc finger protein 513"/>
    <property type="match status" value="1"/>
</dbReference>
<dbReference type="FunFam" id="3.30.160.60:FF:000395">
    <property type="entry name" value="zinc finger protein 513"/>
    <property type="match status" value="1"/>
</dbReference>
<dbReference type="FunFam" id="3.30.160.60:FF:000962">
    <property type="entry name" value="zinc finger protein 513 isoform X1"/>
    <property type="match status" value="1"/>
</dbReference>
<dbReference type="FunFam" id="3.30.160.60:FF:000558">
    <property type="entry name" value="zinc finger protein 513 isoform X2"/>
    <property type="match status" value="1"/>
</dbReference>
<dbReference type="Gene3D" id="3.30.160.60">
    <property type="entry name" value="Classic Zinc Finger"/>
    <property type="match status" value="8"/>
</dbReference>
<dbReference type="InterPro" id="IPR050688">
    <property type="entry name" value="Zinc_finger/UBP_domain"/>
</dbReference>
<dbReference type="InterPro" id="IPR036236">
    <property type="entry name" value="Znf_C2H2_sf"/>
</dbReference>
<dbReference type="InterPro" id="IPR013087">
    <property type="entry name" value="Znf_C2H2_type"/>
</dbReference>
<dbReference type="PANTHER" id="PTHR24403">
    <property type="entry name" value="ZINC FINGER PROTEIN"/>
    <property type="match status" value="1"/>
</dbReference>
<dbReference type="PANTHER" id="PTHR24403:SF109">
    <property type="entry name" value="ZINC FINGER PROTEIN 845-LIKE"/>
    <property type="match status" value="1"/>
</dbReference>
<dbReference type="Pfam" id="PF00096">
    <property type="entry name" value="zf-C2H2"/>
    <property type="match status" value="5"/>
</dbReference>
<dbReference type="SMART" id="SM00355">
    <property type="entry name" value="ZnF_C2H2"/>
    <property type="match status" value="8"/>
</dbReference>
<dbReference type="SUPFAM" id="SSF57667">
    <property type="entry name" value="beta-beta-alpha zinc fingers"/>
    <property type="match status" value="5"/>
</dbReference>
<dbReference type="PROSITE" id="PS00028">
    <property type="entry name" value="ZINC_FINGER_C2H2_1"/>
    <property type="match status" value="3"/>
</dbReference>
<dbReference type="PROSITE" id="PS50157">
    <property type="entry name" value="ZINC_FINGER_C2H2_2"/>
    <property type="match status" value="7"/>
</dbReference>
<proteinExistence type="evidence at protein level"/>
<sequence length="541" mass="58067">MPRRKQSHPQPVKCEGVKVDTEDSFDEGPGALVLESDLLLGQDLEFEEEEEEDEGDGHNDQLMGFERDSEGDSQGARPGLPYGLSDDESGGGRALSAESEVEEPARGPGEARGERPGPACQLCGGPTGEGPCCGAGGPGGGPPLPPRLLYSCRLCAFVSHYSSHLKRHMQTHSGEKPFRCGRCPYASAQLVNLTRHTRTHTGEKPYRCPHCPFACSSLGNLRRHQRTHTGPPTPPCPTCGFRCCAPRPTRPPSPTEQEGTMPRRSEDALILPDLSLHVPPGGASFLPDCGQLRGEGESLCGTGSEPLPELLFPWTCRGCGQELEEGEGSRLGAAMCGRCMRGEAGGVATGGPQGPGDKGFACSLCPFATHYPNHLARHMKTHSGEKPFRCARCPYASAHLDNLKRHQRVHTGEKPYKCPLCPYACGNLANLKRHGRIHSGDKPFRCSLCNYSCNQSMNLKRHMLRHTGEKPFRCATCAYTTGHWDNYKRHQKVHGHGGAGGPGLSAPEGWAPPHSPPSVLSTRGPAALGATGSRALHSDSP</sequence>
<feature type="chain" id="PRO_0000353093" description="Zinc finger protein 513">
    <location>
        <begin position="1"/>
        <end position="541"/>
    </location>
</feature>
<feature type="zinc finger region" description="C2H2-type 1" evidence="3">
    <location>
        <begin position="150"/>
        <end position="172"/>
    </location>
</feature>
<feature type="zinc finger region" description="C2H2-type 2" evidence="3">
    <location>
        <begin position="178"/>
        <end position="200"/>
    </location>
</feature>
<feature type="zinc finger region" description="C2H2-type 3" evidence="3">
    <location>
        <begin position="206"/>
        <end position="228"/>
    </location>
</feature>
<feature type="zinc finger region" description="C2H2-type 4" evidence="3">
    <location>
        <begin position="360"/>
        <end position="382"/>
    </location>
</feature>
<feature type="zinc finger region" description="C2H2-type 5" evidence="3">
    <location>
        <begin position="388"/>
        <end position="410"/>
    </location>
</feature>
<feature type="zinc finger region" description="C2H2-type 6" evidence="3">
    <location>
        <begin position="416"/>
        <end position="438"/>
    </location>
</feature>
<feature type="zinc finger region" description="C2H2-type 7" evidence="3">
    <location>
        <begin position="444"/>
        <end position="466"/>
    </location>
</feature>
<feature type="zinc finger region" description="C2H2-type 8" evidence="3">
    <location>
        <begin position="472"/>
        <end position="494"/>
    </location>
</feature>
<feature type="region of interest" description="Disordered" evidence="4">
    <location>
        <begin position="1"/>
        <end position="118"/>
    </location>
</feature>
<feature type="region of interest" description="Disordered" evidence="4">
    <location>
        <begin position="492"/>
        <end position="541"/>
    </location>
</feature>
<feature type="compositionally biased region" description="Acidic residues" evidence="4">
    <location>
        <begin position="44"/>
        <end position="55"/>
    </location>
</feature>
<feature type="compositionally biased region" description="Basic and acidic residues" evidence="4">
    <location>
        <begin position="103"/>
        <end position="115"/>
    </location>
</feature>
<feature type="modified residue" description="Phosphoserine" evidence="2">
    <location>
        <position position="85"/>
    </location>
</feature>
<feature type="modified residue" description="Phosphoserine" evidence="8">
    <location>
        <position position="96"/>
    </location>
</feature>
<feature type="splice variant" id="VSP_035626" description="In isoform 2." evidence="6">
    <original>MPRRKQSHPQPVKCEGVK</original>
    <variation>MGTAWEGDSTSTLPSL</variation>
    <location>
        <begin position="1"/>
        <end position="18"/>
    </location>
</feature>
<feature type="sequence conflict" description="In Ref. 1; BAC35001." evidence="7" ref="1">
    <original>L</original>
    <variation>R</variation>
    <location>
        <position position="504"/>
    </location>
</feature>
<reference key="1">
    <citation type="journal article" date="2005" name="Science">
        <title>The transcriptional landscape of the mammalian genome.</title>
        <authorList>
            <person name="Carninci P."/>
            <person name="Kasukawa T."/>
            <person name="Katayama S."/>
            <person name="Gough J."/>
            <person name="Frith M.C."/>
            <person name="Maeda N."/>
            <person name="Oyama R."/>
            <person name="Ravasi T."/>
            <person name="Lenhard B."/>
            <person name="Wells C."/>
            <person name="Kodzius R."/>
            <person name="Shimokawa K."/>
            <person name="Bajic V.B."/>
            <person name="Brenner S.E."/>
            <person name="Batalov S."/>
            <person name="Forrest A.R."/>
            <person name="Zavolan M."/>
            <person name="Davis M.J."/>
            <person name="Wilming L.G."/>
            <person name="Aidinis V."/>
            <person name="Allen J.E."/>
            <person name="Ambesi-Impiombato A."/>
            <person name="Apweiler R."/>
            <person name="Aturaliya R.N."/>
            <person name="Bailey T.L."/>
            <person name="Bansal M."/>
            <person name="Baxter L."/>
            <person name="Beisel K.W."/>
            <person name="Bersano T."/>
            <person name="Bono H."/>
            <person name="Chalk A.M."/>
            <person name="Chiu K.P."/>
            <person name="Choudhary V."/>
            <person name="Christoffels A."/>
            <person name="Clutterbuck D.R."/>
            <person name="Crowe M.L."/>
            <person name="Dalla E."/>
            <person name="Dalrymple B.P."/>
            <person name="de Bono B."/>
            <person name="Della Gatta G."/>
            <person name="di Bernardo D."/>
            <person name="Down T."/>
            <person name="Engstrom P."/>
            <person name="Fagiolini M."/>
            <person name="Faulkner G."/>
            <person name="Fletcher C.F."/>
            <person name="Fukushima T."/>
            <person name="Furuno M."/>
            <person name="Futaki S."/>
            <person name="Gariboldi M."/>
            <person name="Georgii-Hemming P."/>
            <person name="Gingeras T.R."/>
            <person name="Gojobori T."/>
            <person name="Green R.E."/>
            <person name="Gustincich S."/>
            <person name="Harbers M."/>
            <person name="Hayashi Y."/>
            <person name="Hensch T.K."/>
            <person name="Hirokawa N."/>
            <person name="Hill D."/>
            <person name="Huminiecki L."/>
            <person name="Iacono M."/>
            <person name="Ikeo K."/>
            <person name="Iwama A."/>
            <person name="Ishikawa T."/>
            <person name="Jakt M."/>
            <person name="Kanapin A."/>
            <person name="Katoh M."/>
            <person name="Kawasawa Y."/>
            <person name="Kelso J."/>
            <person name="Kitamura H."/>
            <person name="Kitano H."/>
            <person name="Kollias G."/>
            <person name="Krishnan S.P."/>
            <person name="Kruger A."/>
            <person name="Kummerfeld S.K."/>
            <person name="Kurochkin I.V."/>
            <person name="Lareau L.F."/>
            <person name="Lazarevic D."/>
            <person name="Lipovich L."/>
            <person name="Liu J."/>
            <person name="Liuni S."/>
            <person name="McWilliam S."/>
            <person name="Madan Babu M."/>
            <person name="Madera M."/>
            <person name="Marchionni L."/>
            <person name="Matsuda H."/>
            <person name="Matsuzawa S."/>
            <person name="Miki H."/>
            <person name="Mignone F."/>
            <person name="Miyake S."/>
            <person name="Morris K."/>
            <person name="Mottagui-Tabar S."/>
            <person name="Mulder N."/>
            <person name="Nakano N."/>
            <person name="Nakauchi H."/>
            <person name="Ng P."/>
            <person name="Nilsson R."/>
            <person name="Nishiguchi S."/>
            <person name="Nishikawa S."/>
            <person name="Nori F."/>
            <person name="Ohara O."/>
            <person name="Okazaki Y."/>
            <person name="Orlando V."/>
            <person name="Pang K.C."/>
            <person name="Pavan W.J."/>
            <person name="Pavesi G."/>
            <person name="Pesole G."/>
            <person name="Petrovsky N."/>
            <person name="Piazza S."/>
            <person name="Reed J."/>
            <person name="Reid J.F."/>
            <person name="Ring B.Z."/>
            <person name="Ringwald M."/>
            <person name="Rost B."/>
            <person name="Ruan Y."/>
            <person name="Salzberg S.L."/>
            <person name="Sandelin A."/>
            <person name="Schneider C."/>
            <person name="Schoenbach C."/>
            <person name="Sekiguchi K."/>
            <person name="Semple C.A."/>
            <person name="Seno S."/>
            <person name="Sessa L."/>
            <person name="Sheng Y."/>
            <person name="Shibata Y."/>
            <person name="Shimada H."/>
            <person name="Shimada K."/>
            <person name="Silva D."/>
            <person name="Sinclair B."/>
            <person name="Sperling S."/>
            <person name="Stupka E."/>
            <person name="Sugiura K."/>
            <person name="Sultana R."/>
            <person name="Takenaka Y."/>
            <person name="Taki K."/>
            <person name="Tammoja K."/>
            <person name="Tan S.L."/>
            <person name="Tang S."/>
            <person name="Taylor M.S."/>
            <person name="Tegner J."/>
            <person name="Teichmann S.A."/>
            <person name="Ueda H.R."/>
            <person name="van Nimwegen E."/>
            <person name="Verardo R."/>
            <person name="Wei C.L."/>
            <person name="Yagi K."/>
            <person name="Yamanishi H."/>
            <person name="Zabarovsky E."/>
            <person name="Zhu S."/>
            <person name="Zimmer A."/>
            <person name="Hide W."/>
            <person name="Bult C."/>
            <person name="Grimmond S.M."/>
            <person name="Teasdale R.D."/>
            <person name="Liu E.T."/>
            <person name="Brusic V."/>
            <person name="Quackenbush J."/>
            <person name="Wahlestedt C."/>
            <person name="Mattick J.S."/>
            <person name="Hume D.A."/>
            <person name="Kai C."/>
            <person name="Sasaki D."/>
            <person name="Tomaru Y."/>
            <person name="Fukuda S."/>
            <person name="Kanamori-Katayama M."/>
            <person name="Suzuki M."/>
            <person name="Aoki J."/>
            <person name="Arakawa T."/>
            <person name="Iida J."/>
            <person name="Imamura K."/>
            <person name="Itoh M."/>
            <person name="Kato T."/>
            <person name="Kawaji H."/>
            <person name="Kawagashira N."/>
            <person name="Kawashima T."/>
            <person name="Kojima M."/>
            <person name="Kondo S."/>
            <person name="Konno H."/>
            <person name="Nakano K."/>
            <person name="Ninomiya N."/>
            <person name="Nishio T."/>
            <person name="Okada M."/>
            <person name="Plessy C."/>
            <person name="Shibata K."/>
            <person name="Shiraki T."/>
            <person name="Suzuki S."/>
            <person name="Tagami M."/>
            <person name="Waki K."/>
            <person name="Watahiki A."/>
            <person name="Okamura-Oho Y."/>
            <person name="Suzuki H."/>
            <person name="Kawai J."/>
            <person name="Hayashizaki Y."/>
        </authorList>
    </citation>
    <scope>NUCLEOTIDE SEQUENCE [LARGE SCALE MRNA] (ISOFORM 2)</scope>
    <source>
        <strain>C57BL/6J</strain>
        <strain>NOD</strain>
        <tissue>Embryonic lung</tissue>
    </source>
</reference>
<reference key="2">
    <citation type="journal article" date="2004" name="Genome Res.">
        <title>The status, quality, and expansion of the NIH full-length cDNA project: the Mammalian Gene Collection (MGC).</title>
        <authorList>
            <consortium name="The MGC Project Team"/>
        </authorList>
    </citation>
    <scope>NUCLEOTIDE SEQUENCE [LARGE SCALE MRNA] (ISOFORM 1)</scope>
    <source>
        <strain>C57BL/6J</strain>
        <tissue>Brain</tissue>
    </source>
</reference>
<reference key="3">
    <citation type="journal article" date="2010" name="Am. J. Hum. Genet.">
        <title>A mutation in ZNF513, a putative regulator of photoreceptor development, causes autosomal-recessive retinitis pigmentosa.</title>
        <authorList>
            <person name="Li L."/>
            <person name="Nakaya N."/>
            <person name="Chavali V.R."/>
            <person name="Ma Z."/>
            <person name="Jiao X."/>
            <person name="Sieving P.A."/>
            <person name="Riazuddin S."/>
            <person name="Tomarev S.I."/>
            <person name="Ayyagari R."/>
            <person name="Riazuddin S.A."/>
            <person name="Hejtmancik J.F."/>
        </authorList>
    </citation>
    <scope>SUBUNIT</scope>
    <scope>TISSUE SPECIFICITY</scope>
</reference>
<reference key="4">
    <citation type="journal article" date="2010" name="Cell">
        <title>A tissue-specific atlas of mouse protein phosphorylation and expression.</title>
        <authorList>
            <person name="Huttlin E.L."/>
            <person name="Jedrychowski M.P."/>
            <person name="Elias J.E."/>
            <person name="Goswami T."/>
            <person name="Rad R."/>
            <person name="Beausoleil S.A."/>
            <person name="Villen J."/>
            <person name="Haas W."/>
            <person name="Sowa M.E."/>
            <person name="Gygi S.P."/>
        </authorList>
    </citation>
    <scope>PHOSPHORYLATION [LARGE SCALE ANALYSIS] AT SER-96</scope>
    <scope>IDENTIFICATION BY MASS SPECTROMETRY [LARGE SCALE ANALYSIS]</scope>
    <source>
        <tissue>Kidney</tissue>
        <tissue>Spleen</tissue>
    </source>
</reference>
<organism>
    <name type="scientific">Mus musculus</name>
    <name type="common">Mouse</name>
    <dbReference type="NCBI Taxonomy" id="10090"/>
    <lineage>
        <taxon>Eukaryota</taxon>
        <taxon>Metazoa</taxon>
        <taxon>Chordata</taxon>
        <taxon>Craniata</taxon>
        <taxon>Vertebrata</taxon>
        <taxon>Euteleostomi</taxon>
        <taxon>Mammalia</taxon>
        <taxon>Eutheria</taxon>
        <taxon>Euarchontoglires</taxon>
        <taxon>Glires</taxon>
        <taxon>Rodentia</taxon>
        <taxon>Myomorpha</taxon>
        <taxon>Muroidea</taxon>
        <taxon>Muridae</taxon>
        <taxon>Murinae</taxon>
        <taxon>Mus</taxon>
        <taxon>Mus</taxon>
    </lineage>
</organism>
<gene>
    <name type="primary">Znf513</name>
    <name type="synonym">Zfp513</name>
</gene>
<evidence type="ECO:0000250" key="1"/>
<evidence type="ECO:0000250" key="2">
    <source>
        <dbReference type="UniProtKB" id="Q8N8E2"/>
    </source>
</evidence>
<evidence type="ECO:0000255" key="3">
    <source>
        <dbReference type="PROSITE-ProRule" id="PRU00042"/>
    </source>
</evidence>
<evidence type="ECO:0000256" key="4">
    <source>
        <dbReference type="SAM" id="MobiDB-lite"/>
    </source>
</evidence>
<evidence type="ECO:0000269" key="5">
    <source>
    </source>
</evidence>
<evidence type="ECO:0000303" key="6">
    <source>
    </source>
</evidence>
<evidence type="ECO:0000305" key="7"/>
<evidence type="ECO:0007744" key="8">
    <source>
    </source>
</evidence>
<keyword id="KW-0025">Alternative splicing</keyword>
<keyword id="KW-0238">DNA-binding</keyword>
<keyword id="KW-0479">Metal-binding</keyword>
<keyword id="KW-0539">Nucleus</keyword>
<keyword id="KW-0597">Phosphoprotein</keyword>
<keyword id="KW-1185">Reference proteome</keyword>
<keyword id="KW-0677">Repeat</keyword>
<keyword id="KW-0804">Transcription</keyword>
<keyword id="KW-0805">Transcription regulation</keyword>
<keyword id="KW-0862">Zinc</keyword>
<keyword id="KW-0863">Zinc-finger</keyword>
<comment type="function">
    <text evidence="1">Transcriptional regulator that plays a role in retinal development and maintenance.</text>
</comment>
<comment type="subunit">
    <text evidence="5">Binds DNA. Can associate with the proximal promoter regions of PAX6 and SP4, and their known targets including ARR3, RHO, OPN1MW2 and OPN1SW.</text>
</comment>
<comment type="subcellular location">
    <subcellularLocation>
        <location evidence="1">Nucleus</location>
    </subcellularLocation>
</comment>
<comment type="alternative products">
    <event type="alternative splicing"/>
    <isoform>
        <id>Q6PD29-1</id>
        <name>1</name>
        <sequence type="displayed"/>
    </isoform>
    <isoform>
        <id>Q6PD29-2</id>
        <name>2</name>
        <sequence type="described" ref="VSP_035626"/>
    </isoform>
</comment>
<comment type="tissue specificity">
    <text evidence="5">Widely expressed. In the eye, expression is greatest in the retina and least in the lens and cornea.</text>
</comment>
<comment type="similarity">
    <text evidence="7">Belongs to the krueppel C2H2-type zinc-finger protein family.</text>
</comment>
<comment type="sequence caution" evidence="7">
    <conflict type="erroneous initiation">
        <sequence resource="EMBL-CDS" id="AAH58976"/>
    </conflict>
    <text>Truncated N-terminus.</text>
</comment>
<comment type="sequence caution" evidence="7">
    <conflict type="miscellaneous discrepancy">
        <sequence resource="EMBL-CDS" id="BAC35001"/>
    </conflict>
    <text>Probable cloning artifact.</text>
</comment>
<protein>
    <recommendedName>
        <fullName>Zinc finger protein 513</fullName>
    </recommendedName>
</protein>